<name>RNC_MYCM1</name>
<accession>Q6KHN3</accession>
<keyword id="KW-0963">Cytoplasm</keyword>
<keyword id="KW-0255">Endonuclease</keyword>
<keyword id="KW-0378">Hydrolase</keyword>
<keyword id="KW-0460">Magnesium</keyword>
<keyword id="KW-0479">Metal-binding</keyword>
<keyword id="KW-0507">mRNA processing</keyword>
<keyword id="KW-0540">Nuclease</keyword>
<keyword id="KW-1185">Reference proteome</keyword>
<keyword id="KW-0694">RNA-binding</keyword>
<keyword id="KW-0698">rRNA processing</keyword>
<keyword id="KW-0699">rRNA-binding</keyword>
<keyword id="KW-0819">tRNA processing</keyword>
<evidence type="ECO:0000255" key="1">
    <source>
        <dbReference type="HAMAP-Rule" id="MF_00104"/>
    </source>
</evidence>
<proteinExistence type="inferred from homology"/>
<organism>
    <name type="scientific">Mycoplasma mobile (strain ATCC 43663 / 163K / NCTC 11711)</name>
    <name type="common">Mesomycoplasma mobile</name>
    <dbReference type="NCBI Taxonomy" id="267748"/>
    <lineage>
        <taxon>Bacteria</taxon>
        <taxon>Bacillati</taxon>
        <taxon>Mycoplasmatota</taxon>
        <taxon>Mycoplasmoidales</taxon>
        <taxon>Metamycoplasmataceae</taxon>
        <taxon>Mesomycoplasma</taxon>
    </lineage>
</organism>
<reference key="1">
    <citation type="journal article" date="2004" name="Genome Res.">
        <title>The complete genome and proteome of Mycoplasma mobile.</title>
        <authorList>
            <person name="Jaffe J.D."/>
            <person name="Stange-Thomann N."/>
            <person name="Smith C."/>
            <person name="DeCaprio D."/>
            <person name="Fisher S."/>
            <person name="Butler J."/>
            <person name="Calvo S."/>
            <person name="Elkins T."/>
            <person name="FitzGerald M.G."/>
            <person name="Hafez N."/>
            <person name="Kodira C.D."/>
            <person name="Major J."/>
            <person name="Wang S."/>
            <person name="Wilkinson J."/>
            <person name="Nicol R."/>
            <person name="Nusbaum C."/>
            <person name="Birren B."/>
            <person name="Berg H.C."/>
            <person name="Church G.M."/>
        </authorList>
    </citation>
    <scope>NUCLEOTIDE SEQUENCE [LARGE SCALE GENOMIC DNA]</scope>
    <source>
        <strain>ATCC 43663 / NCTC 11711 / 163 K</strain>
    </source>
</reference>
<protein>
    <recommendedName>
        <fullName evidence="1">Ribonuclease 3</fullName>
        <ecNumber evidence="1">3.1.26.3</ecNumber>
    </recommendedName>
    <alternativeName>
        <fullName evidence="1">Ribonuclease III</fullName>
        <shortName evidence="1">RNase III</shortName>
    </alternativeName>
</protein>
<gene>
    <name evidence="1" type="primary">rnc</name>
    <name type="ordered locus">MMOB4110</name>
</gene>
<dbReference type="EC" id="3.1.26.3" evidence="1"/>
<dbReference type="EMBL" id="AE017308">
    <property type="protein sequence ID" value="AAT27897.1"/>
    <property type="molecule type" value="Genomic_DNA"/>
</dbReference>
<dbReference type="RefSeq" id="WP_011264931.1">
    <property type="nucleotide sequence ID" value="NC_006908.1"/>
</dbReference>
<dbReference type="SMR" id="Q6KHN3"/>
<dbReference type="STRING" id="267748.MMOB4110"/>
<dbReference type="KEGG" id="mmo:MMOB4110"/>
<dbReference type="eggNOG" id="COG0571">
    <property type="taxonomic scope" value="Bacteria"/>
</dbReference>
<dbReference type="HOGENOM" id="CLU_000907_1_3_14"/>
<dbReference type="OrthoDB" id="9805026at2"/>
<dbReference type="Proteomes" id="UP000009072">
    <property type="component" value="Chromosome"/>
</dbReference>
<dbReference type="GO" id="GO:0005737">
    <property type="term" value="C:cytoplasm"/>
    <property type="evidence" value="ECO:0007669"/>
    <property type="project" value="UniProtKB-SubCell"/>
</dbReference>
<dbReference type="GO" id="GO:0003725">
    <property type="term" value="F:double-stranded RNA binding"/>
    <property type="evidence" value="ECO:0007669"/>
    <property type="project" value="TreeGrafter"/>
</dbReference>
<dbReference type="GO" id="GO:0046872">
    <property type="term" value="F:metal ion binding"/>
    <property type="evidence" value="ECO:0007669"/>
    <property type="project" value="UniProtKB-KW"/>
</dbReference>
<dbReference type="GO" id="GO:0004525">
    <property type="term" value="F:ribonuclease III activity"/>
    <property type="evidence" value="ECO:0007669"/>
    <property type="project" value="UniProtKB-UniRule"/>
</dbReference>
<dbReference type="GO" id="GO:0019843">
    <property type="term" value="F:rRNA binding"/>
    <property type="evidence" value="ECO:0007669"/>
    <property type="project" value="UniProtKB-KW"/>
</dbReference>
<dbReference type="GO" id="GO:0006397">
    <property type="term" value="P:mRNA processing"/>
    <property type="evidence" value="ECO:0007669"/>
    <property type="project" value="UniProtKB-UniRule"/>
</dbReference>
<dbReference type="GO" id="GO:0010468">
    <property type="term" value="P:regulation of gene expression"/>
    <property type="evidence" value="ECO:0007669"/>
    <property type="project" value="TreeGrafter"/>
</dbReference>
<dbReference type="GO" id="GO:0006364">
    <property type="term" value="P:rRNA processing"/>
    <property type="evidence" value="ECO:0007669"/>
    <property type="project" value="UniProtKB-UniRule"/>
</dbReference>
<dbReference type="GO" id="GO:0008033">
    <property type="term" value="P:tRNA processing"/>
    <property type="evidence" value="ECO:0007669"/>
    <property type="project" value="UniProtKB-KW"/>
</dbReference>
<dbReference type="CDD" id="cd10845">
    <property type="entry name" value="DSRM_RNAse_III_family"/>
    <property type="match status" value="1"/>
</dbReference>
<dbReference type="CDD" id="cd00593">
    <property type="entry name" value="RIBOc"/>
    <property type="match status" value="1"/>
</dbReference>
<dbReference type="Gene3D" id="3.30.160.20">
    <property type="match status" value="1"/>
</dbReference>
<dbReference type="Gene3D" id="1.10.1520.10">
    <property type="entry name" value="Ribonuclease III domain"/>
    <property type="match status" value="1"/>
</dbReference>
<dbReference type="HAMAP" id="MF_00104">
    <property type="entry name" value="RNase_III"/>
    <property type="match status" value="1"/>
</dbReference>
<dbReference type="InterPro" id="IPR014720">
    <property type="entry name" value="dsRBD_dom"/>
</dbReference>
<dbReference type="InterPro" id="IPR011907">
    <property type="entry name" value="RNase_III"/>
</dbReference>
<dbReference type="InterPro" id="IPR000999">
    <property type="entry name" value="RNase_III_dom"/>
</dbReference>
<dbReference type="InterPro" id="IPR036389">
    <property type="entry name" value="RNase_III_sf"/>
</dbReference>
<dbReference type="NCBIfam" id="TIGR02191">
    <property type="entry name" value="RNaseIII"/>
    <property type="match status" value="1"/>
</dbReference>
<dbReference type="PANTHER" id="PTHR11207:SF0">
    <property type="entry name" value="RIBONUCLEASE 3"/>
    <property type="match status" value="1"/>
</dbReference>
<dbReference type="PANTHER" id="PTHR11207">
    <property type="entry name" value="RIBONUCLEASE III"/>
    <property type="match status" value="1"/>
</dbReference>
<dbReference type="Pfam" id="PF00035">
    <property type="entry name" value="dsrm"/>
    <property type="match status" value="1"/>
</dbReference>
<dbReference type="Pfam" id="PF14622">
    <property type="entry name" value="Ribonucleas_3_3"/>
    <property type="match status" value="1"/>
</dbReference>
<dbReference type="SMART" id="SM00358">
    <property type="entry name" value="DSRM"/>
    <property type="match status" value="1"/>
</dbReference>
<dbReference type="SMART" id="SM00535">
    <property type="entry name" value="RIBOc"/>
    <property type="match status" value="1"/>
</dbReference>
<dbReference type="SUPFAM" id="SSF54768">
    <property type="entry name" value="dsRNA-binding domain-like"/>
    <property type="match status" value="1"/>
</dbReference>
<dbReference type="SUPFAM" id="SSF69065">
    <property type="entry name" value="RNase III domain-like"/>
    <property type="match status" value="1"/>
</dbReference>
<dbReference type="PROSITE" id="PS50137">
    <property type="entry name" value="DS_RBD"/>
    <property type="match status" value="1"/>
</dbReference>
<dbReference type="PROSITE" id="PS50142">
    <property type="entry name" value="RNASE_3_2"/>
    <property type="match status" value="1"/>
</dbReference>
<feature type="chain" id="PRO_0000228550" description="Ribonuclease 3">
    <location>
        <begin position="1"/>
        <end position="246"/>
    </location>
</feature>
<feature type="domain" description="RNase III" evidence="1">
    <location>
        <begin position="10"/>
        <end position="135"/>
    </location>
</feature>
<feature type="domain" description="DRBM" evidence="1">
    <location>
        <begin position="161"/>
        <end position="230"/>
    </location>
</feature>
<feature type="active site" evidence="1">
    <location>
        <position position="54"/>
    </location>
</feature>
<feature type="active site" evidence="1">
    <location>
        <position position="124"/>
    </location>
</feature>
<feature type="binding site" evidence="1">
    <location>
        <position position="50"/>
    </location>
    <ligand>
        <name>Mg(2+)</name>
        <dbReference type="ChEBI" id="CHEBI:18420"/>
    </ligand>
</feature>
<feature type="binding site" evidence="1">
    <location>
        <position position="121"/>
    </location>
    <ligand>
        <name>Mg(2+)</name>
        <dbReference type="ChEBI" id="CHEBI:18420"/>
    </ligand>
</feature>
<feature type="binding site" evidence="1">
    <location>
        <position position="124"/>
    </location>
    <ligand>
        <name>Mg(2+)</name>
        <dbReference type="ChEBI" id="CHEBI:18420"/>
    </ligand>
</feature>
<sequence>MNKKTKIEGLENFLTLNNIIFKDIKYYIQALTHKTYANEHANIESYDILEFIGDAILQMKSSIFIFQHFQNITEGEASLIRAKNVCSSGLSELSKKLGLSKLLLISKGSEHLRENVKINADLFESFVAAIYLDLGDEKLEEFLKEIFYPYISTTNLESIKDPKSSFQEYIQSYSNEIIEYKITQLENELRSELFKAELMHNGITYGVGFGKTKKVAEEEAATRALETLKAPSKQTIKKAIKAEKKE</sequence>
<comment type="function">
    <text evidence="1">Digests double-stranded RNA. Involved in the processing of primary rRNA transcript to yield the immediate precursors to the large and small rRNAs (23S and 16S). Processes some mRNAs, and tRNAs when they are encoded in the rRNA operon. Processes pre-crRNA and tracrRNA of type II CRISPR loci if present in the organism.</text>
</comment>
<comment type="catalytic activity">
    <reaction evidence="1">
        <text>Endonucleolytic cleavage to 5'-phosphomonoester.</text>
        <dbReference type="EC" id="3.1.26.3"/>
    </reaction>
</comment>
<comment type="cofactor">
    <cofactor evidence="1">
        <name>Mg(2+)</name>
        <dbReference type="ChEBI" id="CHEBI:18420"/>
    </cofactor>
</comment>
<comment type="subunit">
    <text evidence="1">Homodimer.</text>
</comment>
<comment type="subcellular location">
    <subcellularLocation>
        <location evidence="1">Cytoplasm</location>
    </subcellularLocation>
</comment>
<comment type="similarity">
    <text evidence="1">Belongs to the ribonuclease III family.</text>
</comment>